<organism>
    <name type="scientific">Oryctolagus cuniculus</name>
    <name type="common">Rabbit</name>
    <dbReference type="NCBI Taxonomy" id="9986"/>
    <lineage>
        <taxon>Eukaryota</taxon>
        <taxon>Metazoa</taxon>
        <taxon>Chordata</taxon>
        <taxon>Craniata</taxon>
        <taxon>Vertebrata</taxon>
        <taxon>Euteleostomi</taxon>
        <taxon>Mammalia</taxon>
        <taxon>Eutheria</taxon>
        <taxon>Euarchontoglires</taxon>
        <taxon>Glires</taxon>
        <taxon>Lagomorpha</taxon>
        <taxon>Leporidae</taxon>
        <taxon>Oryctolagus</taxon>
    </lineage>
</organism>
<gene>
    <name type="primary">PGR</name>
    <name type="synonym">NR3C3</name>
</gene>
<feature type="chain" id="PRO_0000053696" description="Progesterone receptor">
    <location>
        <begin position="1"/>
        <end position="930"/>
    </location>
</feature>
<feature type="domain" description="NR LBD" evidence="6">
    <location>
        <begin position="676"/>
        <end position="910"/>
    </location>
</feature>
<feature type="DNA-binding region" description="Nuclear receptor" evidence="5">
    <location>
        <begin position="566"/>
        <end position="640"/>
    </location>
</feature>
<feature type="zinc finger region" description="NR C4-type" evidence="5">
    <location>
        <begin position="568"/>
        <end position="588"/>
    </location>
</feature>
<feature type="zinc finger region" description="NR C4-type" evidence="5">
    <location>
        <begin position="604"/>
        <end position="628"/>
    </location>
</feature>
<feature type="region of interest" description="Modulating, Pro-Rich">
    <location>
        <begin position="1"/>
        <end position="565"/>
    </location>
</feature>
<feature type="region of interest" description="AF3; mediates transcriptional activation" evidence="2">
    <location>
        <begin position="1"/>
        <end position="165"/>
    </location>
</feature>
<feature type="region of interest" description="Disordered" evidence="7">
    <location>
        <begin position="1"/>
        <end position="133"/>
    </location>
</feature>
<feature type="region of interest" description="Disordered" evidence="7">
    <location>
        <begin position="148"/>
        <end position="260"/>
    </location>
</feature>
<feature type="region of interest" description="Mediates transcriptional transrepression" evidence="2">
    <location>
        <begin position="166"/>
        <end position="304"/>
    </location>
</feature>
<feature type="region of interest" description="Disordered" evidence="7">
    <location>
        <begin position="334"/>
        <end position="356"/>
    </location>
</feature>
<feature type="region of interest" description="Disordered" evidence="7">
    <location>
        <begin position="415"/>
        <end position="454"/>
    </location>
</feature>
<feature type="region of interest" description="AF1; mediates transcriptional activation" evidence="2">
    <location>
        <begin position="457"/>
        <end position="547"/>
    </location>
</feature>
<feature type="region of interest" description="AF2; mediates transcriptional activation" evidence="2">
    <location>
        <begin position="684"/>
        <end position="930"/>
    </location>
</feature>
<feature type="short sequence motif" description="LXXL motif 1" evidence="2">
    <location>
        <begin position="56"/>
        <end position="60"/>
    </location>
</feature>
<feature type="short sequence motif" description="LXXL motif 2" evidence="2">
    <location>
        <begin position="116"/>
        <end position="120"/>
    </location>
</feature>
<feature type="short sequence motif" description="Nuclear localization signal" evidence="4">
    <location>
        <begin position="184"/>
        <end position="188"/>
    </location>
</feature>
<feature type="compositionally biased region" description="Basic and acidic residues" evidence="7">
    <location>
        <begin position="1"/>
        <end position="11"/>
    </location>
</feature>
<feature type="compositionally biased region" description="Polar residues" evidence="7">
    <location>
        <begin position="38"/>
        <end position="49"/>
    </location>
</feature>
<feature type="compositionally biased region" description="Low complexity" evidence="7">
    <location>
        <begin position="187"/>
        <end position="204"/>
    </location>
</feature>
<feature type="compositionally biased region" description="Pro residues" evidence="7">
    <location>
        <begin position="420"/>
        <end position="430"/>
    </location>
</feature>
<feature type="compositionally biased region" description="Low complexity" evidence="7">
    <location>
        <begin position="431"/>
        <end position="454"/>
    </location>
</feature>
<feature type="binding site" evidence="2">
    <location>
        <position position="763"/>
    </location>
    <ligand>
        <name>progesterone</name>
        <dbReference type="ChEBI" id="CHEBI:17026"/>
    </ligand>
</feature>
<feature type="modified residue" description="Phosphoserine" evidence="2">
    <location>
        <position position="20"/>
    </location>
</feature>
<feature type="modified residue" description="Phosphoserine" evidence="2">
    <location>
        <position position="82"/>
    </location>
</feature>
<feature type="modified residue" description="Phosphoserine" evidence="2">
    <location>
        <position position="131"/>
    </location>
</feature>
<feature type="modified residue" description="Phosphoserine" evidence="2">
    <location>
        <position position="191"/>
    </location>
</feature>
<feature type="modified residue" description="Phosphoserine" evidence="2">
    <location>
        <position position="212"/>
    </location>
</feature>
<feature type="modified residue" description="Phosphoserine; by MAPK1" evidence="2">
    <location>
        <position position="293"/>
    </location>
</feature>
<feature type="modified residue" description="Phosphoserine; by MAPK" evidence="2">
    <location>
        <position position="344"/>
    </location>
</feature>
<feature type="modified residue" description="Phosphoserine; by CDK2" evidence="2">
    <location>
        <position position="399"/>
    </location>
</feature>
<feature type="modified residue" description="Phosphoserine" evidence="2">
    <location>
        <position position="673"/>
    </location>
</feature>
<feature type="cross-link" description="Glycyl lysine isopeptide (Lys-Gly) (interchain with G-Cter in SUMO)" evidence="1">
    <location>
        <position position="7"/>
    </location>
</feature>
<feature type="cross-link" description="Glycyl lysine isopeptide (Lys-Gly) (interchain with G-Cter in SUMO); alternate" evidence="1">
    <location>
        <position position="387"/>
    </location>
</feature>
<feature type="cross-link" description="Glycyl lysine isopeptide (Lys-Gly) (interchain with G-Cter in ubiquitin); alternate" evidence="2">
    <location>
        <position position="387"/>
    </location>
</feature>
<feature type="cross-link" description="Glycyl lysine isopeptide (Lys-Gly) (interchain with G-Cter in SUMO)" evidence="1">
    <location>
        <position position="532"/>
    </location>
</feature>
<dbReference type="EMBL" id="M14547">
    <property type="protein sequence ID" value="AAA31443.1"/>
    <property type="molecule type" value="mRNA"/>
</dbReference>
<dbReference type="PIR" id="A25923">
    <property type="entry name" value="A25923"/>
</dbReference>
<dbReference type="RefSeq" id="NP_001075736.1">
    <property type="nucleotide sequence ID" value="NM_001082267.1"/>
</dbReference>
<dbReference type="SMR" id="P06186"/>
<dbReference type="FunCoup" id="P06186">
    <property type="interactions" value="63"/>
</dbReference>
<dbReference type="STRING" id="9986.ENSOCUP00000012634"/>
<dbReference type="BindingDB" id="P06186"/>
<dbReference type="ChEMBL" id="CHEMBL3456"/>
<dbReference type="DrugCentral" id="P06186"/>
<dbReference type="PaxDb" id="9986-ENSOCUP00000012634"/>
<dbReference type="Ensembl" id="ENSOCUT00000014695.4">
    <property type="protein sequence ID" value="ENSOCUP00000012634.3"/>
    <property type="gene ID" value="ENSOCUG00000014693.4"/>
</dbReference>
<dbReference type="GeneID" id="100009094"/>
<dbReference type="KEGG" id="ocu:100009094"/>
<dbReference type="CTD" id="5241"/>
<dbReference type="eggNOG" id="KOG3575">
    <property type="taxonomic scope" value="Eukaryota"/>
</dbReference>
<dbReference type="GeneTree" id="ENSGT00940000159713"/>
<dbReference type="HOGENOM" id="CLU_014081_0_0_1"/>
<dbReference type="InParanoid" id="P06186"/>
<dbReference type="OMA" id="PDLILNX"/>
<dbReference type="OrthoDB" id="8580220at2759"/>
<dbReference type="PRO" id="PR:P06186"/>
<dbReference type="Proteomes" id="UP000001811">
    <property type="component" value="Chromosome 1"/>
</dbReference>
<dbReference type="Bgee" id="ENSOCUG00000014693">
    <property type="expression patterns" value="Expressed in uterus and 13 other cell types or tissues"/>
</dbReference>
<dbReference type="GO" id="GO:0000785">
    <property type="term" value="C:chromatin"/>
    <property type="evidence" value="ECO:0007669"/>
    <property type="project" value="Ensembl"/>
</dbReference>
<dbReference type="GO" id="GO:0005737">
    <property type="term" value="C:cytoplasm"/>
    <property type="evidence" value="ECO:0007669"/>
    <property type="project" value="UniProtKB-SubCell"/>
</dbReference>
<dbReference type="GO" id="GO:0005634">
    <property type="term" value="C:nucleus"/>
    <property type="evidence" value="ECO:0007669"/>
    <property type="project" value="UniProtKB-SubCell"/>
</dbReference>
<dbReference type="GO" id="GO:0005886">
    <property type="term" value="C:plasma membrane"/>
    <property type="evidence" value="ECO:0007669"/>
    <property type="project" value="Ensembl"/>
</dbReference>
<dbReference type="GO" id="GO:0051117">
    <property type="term" value="F:ATPase binding"/>
    <property type="evidence" value="ECO:0007669"/>
    <property type="project" value="Ensembl"/>
</dbReference>
<dbReference type="GO" id="GO:0001228">
    <property type="term" value="F:DNA-binding transcription activator activity, RNA polymerase II-specific"/>
    <property type="evidence" value="ECO:0007669"/>
    <property type="project" value="Ensembl"/>
</dbReference>
<dbReference type="GO" id="GO:0042802">
    <property type="term" value="F:identical protein binding"/>
    <property type="evidence" value="ECO:0007669"/>
    <property type="project" value="Ensembl"/>
</dbReference>
<dbReference type="GO" id="GO:0003707">
    <property type="term" value="F:nuclear steroid receptor activity"/>
    <property type="evidence" value="ECO:0007669"/>
    <property type="project" value="Ensembl"/>
</dbReference>
<dbReference type="GO" id="GO:0000978">
    <property type="term" value="F:RNA polymerase II cis-regulatory region sequence-specific DNA binding"/>
    <property type="evidence" value="ECO:0007669"/>
    <property type="project" value="Ensembl"/>
</dbReference>
<dbReference type="GO" id="GO:0005496">
    <property type="term" value="F:steroid binding"/>
    <property type="evidence" value="ECO:0007669"/>
    <property type="project" value="UniProtKB-KW"/>
</dbReference>
<dbReference type="GO" id="GO:0001223">
    <property type="term" value="F:transcription coactivator binding"/>
    <property type="evidence" value="ECO:0007669"/>
    <property type="project" value="Ensembl"/>
</dbReference>
<dbReference type="GO" id="GO:0008270">
    <property type="term" value="F:zinc ion binding"/>
    <property type="evidence" value="ECO:0007669"/>
    <property type="project" value="UniProtKB-KW"/>
</dbReference>
<dbReference type="GO" id="GO:0002071">
    <property type="term" value="P:glandular epithelial cell maturation"/>
    <property type="evidence" value="ECO:0007669"/>
    <property type="project" value="Ensembl"/>
</dbReference>
<dbReference type="GO" id="GO:0048286">
    <property type="term" value="P:lung alveolus development"/>
    <property type="evidence" value="ECO:0007669"/>
    <property type="project" value="Ensembl"/>
</dbReference>
<dbReference type="GO" id="GO:0051457">
    <property type="term" value="P:maintenance of protein location in nucleus"/>
    <property type="evidence" value="ECO:0007669"/>
    <property type="project" value="Ensembl"/>
</dbReference>
<dbReference type="GO" id="GO:0010629">
    <property type="term" value="P:negative regulation of gene expression"/>
    <property type="evidence" value="ECO:0007669"/>
    <property type="project" value="Ensembl"/>
</dbReference>
<dbReference type="GO" id="GO:0001542">
    <property type="term" value="P:ovulation from ovarian follicle"/>
    <property type="evidence" value="ECO:0007669"/>
    <property type="project" value="Ensembl"/>
</dbReference>
<dbReference type="GO" id="GO:0038001">
    <property type="term" value="P:paracrine signaling"/>
    <property type="evidence" value="ECO:0007669"/>
    <property type="project" value="Ensembl"/>
</dbReference>
<dbReference type="GO" id="GO:0050847">
    <property type="term" value="P:progesterone receptor signaling pathway"/>
    <property type="evidence" value="ECO:0007669"/>
    <property type="project" value="Ensembl"/>
</dbReference>
<dbReference type="GO" id="GO:0050678">
    <property type="term" value="P:regulation of epithelial cell proliferation"/>
    <property type="evidence" value="ECO:0007669"/>
    <property type="project" value="Ensembl"/>
</dbReference>
<dbReference type="GO" id="GO:0060748">
    <property type="term" value="P:tertiary branching involved in mammary gland duct morphogenesis"/>
    <property type="evidence" value="ECO:0007669"/>
    <property type="project" value="Ensembl"/>
</dbReference>
<dbReference type="CDD" id="cd07172">
    <property type="entry name" value="NR_DBD_GR_PR"/>
    <property type="match status" value="1"/>
</dbReference>
<dbReference type="CDD" id="cd07074">
    <property type="entry name" value="NR_LBD_PR"/>
    <property type="match status" value="1"/>
</dbReference>
<dbReference type="FunFam" id="1.10.565.10:FF:000004">
    <property type="entry name" value="Androgen receptor variant"/>
    <property type="match status" value="1"/>
</dbReference>
<dbReference type="FunFam" id="3.30.50.10:FF:000027">
    <property type="entry name" value="Progesterone receptor"/>
    <property type="match status" value="1"/>
</dbReference>
<dbReference type="Gene3D" id="3.30.50.10">
    <property type="entry name" value="Erythroid Transcription Factor GATA-1, subunit A"/>
    <property type="match status" value="1"/>
</dbReference>
<dbReference type="Gene3D" id="1.10.565.10">
    <property type="entry name" value="Retinoid X Receptor"/>
    <property type="match status" value="1"/>
</dbReference>
<dbReference type="InterPro" id="IPR035500">
    <property type="entry name" value="NHR-like_dom_sf"/>
</dbReference>
<dbReference type="InterPro" id="IPR000536">
    <property type="entry name" value="Nucl_hrmn_rcpt_lig-bd"/>
</dbReference>
<dbReference type="InterPro" id="IPR050200">
    <property type="entry name" value="Nuclear_hormone_rcpt_NR3"/>
</dbReference>
<dbReference type="InterPro" id="IPR001723">
    <property type="entry name" value="Nuclear_hrmn_rcpt"/>
</dbReference>
<dbReference type="InterPro" id="IPR000128">
    <property type="entry name" value="Progest_rcpt"/>
</dbReference>
<dbReference type="InterPro" id="IPR001628">
    <property type="entry name" value="Znf_hrmn_rcpt"/>
</dbReference>
<dbReference type="InterPro" id="IPR013088">
    <property type="entry name" value="Znf_NHR/GATA"/>
</dbReference>
<dbReference type="PANTHER" id="PTHR48092">
    <property type="entry name" value="KNIRPS-RELATED PROTEIN-RELATED"/>
    <property type="match status" value="1"/>
</dbReference>
<dbReference type="Pfam" id="PF00104">
    <property type="entry name" value="Hormone_recep"/>
    <property type="match status" value="1"/>
</dbReference>
<dbReference type="Pfam" id="PF02161">
    <property type="entry name" value="Prog_receptor"/>
    <property type="match status" value="1"/>
</dbReference>
<dbReference type="Pfam" id="PF00105">
    <property type="entry name" value="zf-C4"/>
    <property type="match status" value="1"/>
</dbReference>
<dbReference type="PRINTS" id="PR00544">
    <property type="entry name" value="PROGESTRONER"/>
</dbReference>
<dbReference type="PRINTS" id="PR00398">
    <property type="entry name" value="STRDHORMONER"/>
</dbReference>
<dbReference type="PRINTS" id="PR00047">
    <property type="entry name" value="STROIDFINGER"/>
</dbReference>
<dbReference type="SMART" id="SM00430">
    <property type="entry name" value="HOLI"/>
    <property type="match status" value="1"/>
</dbReference>
<dbReference type="SMART" id="SM00399">
    <property type="entry name" value="ZnF_C4"/>
    <property type="match status" value="1"/>
</dbReference>
<dbReference type="SUPFAM" id="SSF57716">
    <property type="entry name" value="Glucocorticoid receptor-like (DNA-binding domain)"/>
    <property type="match status" value="1"/>
</dbReference>
<dbReference type="SUPFAM" id="SSF48508">
    <property type="entry name" value="Nuclear receptor ligand-binding domain"/>
    <property type="match status" value="1"/>
</dbReference>
<dbReference type="PROSITE" id="PS51843">
    <property type="entry name" value="NR_LBD"/>
    <property type="match status" value="1"/>
</dbReference>
<dbReference type="PROSITE" id="PS00031">
    <property type="entry name" value="NUCLEAR_REC_DBD_1"/>
    <property type="match status" value="1"/>
</dbReference>
<dbReference type="PROSITE" id="PS51030">
    <property type="entry name" value="NUCLEAR_REC_DBD_2"/>
    <property type="match status" value="1"/>
</dbReference>
<sequence>MTELKAKEPRAPHVAGGAPSPTEVGSQLLGRPDPGPFQGSQTSEASSVVSAIPISLDGLLFPRPCQGQNPPDGKTQDPPSLSDVEGAFPGVEAPEGAGDSSSRPPEKDSGLLDSVLDTLLAPSGPGQSHASPATCEAISPWCLFGPDLPEDPRAAPATKGVLAPLMSRPEDKAGDSSGTAAAHKVLPRGLSPSRQLLLPSSGSPHWPAVKPSPQPAAVQVDEEDSSESEGTVGPLLKGQPRALGGTAAGGGAAPVASGAAAGGVALVPKEDSRFSAPRVSLAEQDAPVAPGRSPLATSVVDFIHVPILPLNHAFLATRTRQLLEGESYDGGAAAASPFVPQRGSPSASSTPVAGGDFPDCTYPPDAEPKDDAFPLYGDFQPPALKIKEEEEAAEAAARSPRTYLVAGANPAAFPDFQLAAPPPPSLPPRVPSSRPGEAAVAASPGSASVSSSSSSGSTLECILYKAEGAPPQQGPFAPLPCKPPGAGACLLPRDGLPSTSASGAAAGAAPALYPTLGLNGLPQLGYQAAVLKEGLPQVYTPYLNYLRPDSEASQSPQYSFESLPQKICLICGDEASGCHYGVLTCGSCKVFFKRAMEGQHNYLCAGRNDCIVDKIRRKNCPACRLRKCCQAGMVLGGRKFKKFNKVRVMRALDAVALPQPVGIPNESQRITFSPSQEIQLIPPLINLLMSIEPDVIYAGHDNTKPDTSSSLLTSLNQLGERQLLSVVKWSKSLPGFRNLHIDDQITLIQYSWMSLMVFGLGWRSYKHVSGQMLYFAPDLILNEQRMKESSFYSLCLTMWQIPQEFVKLQVSQEEFLCMKVLLLLNTIPLEGLRSQSQFEEMRSSYIRELIKAIGLRQKGVVSSSQRFYQLTKLLDNLHDLVKQLHLYCLNTFIQSRALSVEFPEMMSEVIAAQLPKILAGMVKPLLFHKK</sequence>
<name>PRGR_RABIT</name>
<accession>P06186</accession>
<comment type="function">
    <text evidence="2">The steroid hormones and their receptors are involved in the regulation of eukaryotic gene expression and affect cellular proliferation and differentiation in target tissues. Transcriptional activator of several progesteron-dependent promoters in a variety of cell types. Involved in activation of SRC-dependent MAPK signaling on hormone stimulation.</text>
</comment>
<comment type="subunit">
    <text evidence="2 3">Interacts with SMARD1 and UNC45A. Interacts with CUEDC2; the interaction promotes ubiquitination, decreases sumoylation, and represses transcriptional activity. Interacts with PIAS3; the interaction promotes sumoylation of PR in a hormone-dependent manner, inhibits DNA-binding, and alters nuclear export. Interacts with SP1; the interaction requires ligand-induced phosphorylation on Ser-344 by ERK1/2-MAPK. Interacts with PRMT2. Interacts with NCOA2 and NCOA1. Interacts with KLF9. Interacts with GTF2B (By similarity).</text>
</comment>
<comment type="subcellular location">
    <subcellularLocation>
        <location>Nucleus</location>
    </subcellularLocation>
    <subcellularLocation>
        <location>Cytoplasm</location>
    </subcellularLocation>
    <text evidence="1">Nucleoplasmic shuttling is both hormone- and cell cycle-dependent. On hormone stimulation, retained in the cytoplasm in the G(1) and G(2)/M phases (By similarity).</text>
</comment>
<comment type="domain">
    <text>Composed of three domains: a modulating N-terminal domain, a DNA-binding domain and a C-terminal ligand-binding domain.</text>
</comment>
<comment type="PTM">
    <text evidence="1">Phosphorylated on multiple serine sites. Several of these sites are hormone-dependent. Phosphorylation on Ser-293 is highly hormone-dependent and modulates ubiquitination and sumoylation on Lys-387. Phosphorylation on Ser-102 and Ser-344 also requires induction by hormone. Basal phosphorylation on Ser-82, Ser-191 and Ser-399 is increased in response to progesterone and can be phosphorylated in vitro by the CDK2-A1 complex. Increased levels of phosphorylation on Ser-399 also in the presence of EGF, heregulin, IGF, PMA and FBS. Phosphorylation at this site by CDK2 is ligand-independent, and increases nuclear translocation and transcriptional activity. Phosphorylation at Ser-293, but not at Ser-191, is impaired during the G(2)/M phase of the cell cycle. Phosphorylation on Ser-344 by ERK1/2 MAPK is required for interaction with SP1 (By similarity).</text>
</comment>
<comment type="PTM">
    <text evidence="1">Sumoylation is hormone-dependent and represses transcriptional activity. Sumoylation on all three sites is enhanced by PIAS3. Desumoylated by SENP1. Sumoylation on Lys-387, the main site of sumoylation, is repressed by ubiquitination on the same site, and modulated by phosphorylation at Ser-293 (By similarity).</text>
</comment>
<comment type="PTM">
    <text evidence="2">Ubiquitination is hormone-dependent and represses sumoylation on the same site (By similarity). Promoted by MAPK-mediated phosphorylation on Ser-293 (By similarity). Ubiquitinated by UBR5, leading to its degradation: UBR5 specifically recognizes and binds ligand-bound PGR when it is not associated with coactivators (NCOAs) (By similarity). In presence of NCOAs, the UBR5-degron is not accessible, preventing its ubiquitination and degradation (By similarity).</text>
</comment>
<comment type="PTM">
    <text evidence="1">Palmitoylated by ZDHHC7 and ZDHHC21. Palmitoylation is required for plasma membrane targeting and for rapid intracellular signaling via ERK and AKT kinases and cAMP generation (By similarity).</text>
</comment>
<comment type="similarity">
    <text evidence="8">Belongs to the nuclear hormone receptor family. NR3 subfamily.</text>
</comment>
<keyword id="KW-0963">Cytoplasm</keyword>
<keyword id="KW-0238">DNA-binding</keyword>
<keyword id="KW-1017">Isopeptide bond</keyword>
<keyword id="KW-0446">Lipid-binding</keyword>
<keyword id="KW-0449">Lipoprotein</keyword>
<keyword id="KW-0479">Metal-binding</keyword>
<keyword id="KW-0539">Nucleus</keyword>
<keyword id="KW-0564">Palmitate</keyword>
<keyword id="KW-0597">Phosphoprotein</keyword>
<keyword id="KW-0675">Receptor</keyword>
<keyword id="KW-1185">Reference proteome</keyword>
<keyword id="KW-0754">Steroid-binding</keyword>
<keyword id="KW-0804">Transcription</keyword>
<keyword id="KW-0805">Transcription regulation</keyword>
<keyword id="KW-0832">Ubl conjugation</keyword>
<keyword id="KW-0862">Zinc</keyword>
<keyword id="KW-0863">Zinc-finger</keyword>
<protein>
    <recommendedName>
        <fullName>Progesterone receptor</fullName>
        <shortName>PR</shortName>
    </recommendedName>
    <alternativeName>
        <fullName>Nuclear receptor subfamily 3 group C member 3</fullName>
    </alternativeName>
</protein>
<reference key="1">
    <citation type="journal article" date="1986" name="Proc. Natl. Acad. Sci. U.S.A.">
        <title>Cloning and sequence analysis of rabbit progesterone-receptor complementary DNA.</title>
        <authorList>
            <person name="Loosfelt H."/>
            <person name="Atger M."/>
            <person name="Misrahi M."/>
            <person name="Guiochon-Mantel A."/>
            <person name="Meriel C."/>
            <person name="Logeat F."/>
            <person name="Benarous R."/>
            <person name="Milgrom E."/>
        </authorList>
    </citation>
    <scope>NUCLEOTIDE SEQUENCE [MRNA]</scope>
</reference>
<evidence type="ECO:0000250" key="1"/>
<evidence type="ECO:0000250" key="2">
    <source>
        <dbReference type="UniProtKB" id="P06401"/>
    </source>
</evidence>
<evidence type="ECO:0000250" key="3">
    <source>
        <dbReference type="UniProtKB" id="Q00175"/>
    </source>
</evidence>
<evidence type="ECO:0000255" key="4"/>
<evidence type="ECO:0000255" key="5">
    <source>
        <dbReference type="PROSITE-ProRule" id="PRU00407"/>
    </source>
</evidence>
<evidence type="ECO:0000255" key="6">
    <source>
        <dbReference type="PROSITE-ProRule" id="PRU01189"/>
    </source>
</evidence>
<evidence type="ECO:0000256" key="7">
    <source>
        <dbReference type="SAM" id="MobiDB-lite"/>
    </source>
</evidence>
<evidence type="ECO:0000305" key="8"/>
<proteinExistence type="evidence at transcript level"/>